<protein>
    <recommendedName>
        <fullName evidence="1">Sodium/pantothenate symporter</fullName>
    </recommendedName>
    <alternativeName>
        <fullName evidence="1">Pantothenate permease</fullName>
    </alternativeName>
</protein>
<reference key="1">
    <citation type="journal article" date="1995" name="Science">
        <title>Whole-genome random sequencing and assembly of Haemophilus influenzae Rd.</title>
        <authorList>
            <person name="Fleischmann R.D."/>
            <person name="Adams M.D."/>
            <person name="White O."/>
            <person name="Clayton R.A."/>
            <person name="Kirkness E.F."/>
            <person name="Kerlavage A.R."/>
            <person name="Bult C.J."/>
            <person name="Tomb J.-F."/>
            <person name="Dougherty B.A."/>
            <person name="Merrick J.M."/>
            <person name="McKenney K."/>
            <person name="Sutton G.G."/>
            <person name="FitzHugh W."/>
            <person name="Fields C.A."/>
            <person name="Gocayne J.D."/>
            <person name="Scott J.D."/>
            <person name="Shirley R."/>
            <person name="Liu L.-I."/>
            <person name="Glodek A."/>
            <person name="Kelley J.M."/>
            <person name="Weidman J.F."/>
            <person name="Phillips C.A."/>
            <person name="Spriggs T."/>
            <person name="Hedblom E."/>
            <person name="Cotton M.D."/>
            <person name="Utterback T.R."/>
            <person name="Hanna M.C."/>
            <person name="Nguyen D.T."/>
            <person name="Saudek D.M."/>
            <person name="Brandon R.C."/>
            <person name="Fine L.D."/>
            <person name="Fritchman J.L."/>
            <person name="Fuhrmann J.L."/>
            <person name="Geoghagen N.S.M."/>
            <person name="Gnehm C.L."/>
            <person name="McDonald L.A."/>
            <person name="Small K.V."/>
            <person name="Fraser C.M."/>
            <person name="Smith H.O."/>
            <person name="Venter J.C."/>
        </authorList>
    </citation>
    <scope>NUCLEOTIDE SEQUENCE [LARGE SCALE GENOMIC DNA]</scope>
    <source>
        <strain>ATCC 51907 / DSM 11121 / KW20 / Rd</strain>
    </source>
</reference>
<keyword id="KW-0997">Cell inner membrane</keyword>
<keyword id="KW-1003">Cell membrane</keyword>
<keyword id="KW-0406">Ion transport</keyword>
<keyword id="KW-0472">Membrane</keyword>
<keyword id="KW-1185">Reference proteome</keyword>
<keyword id="KW-0915">Sodium</keyword>
<keyword id="KW-0739">Sodium transport</keyword>
<keyword id="KW-0769">Symport</keyword>
<keyword id="KW-0812">Transmembrane</keyword>
<keyword id="KW-1133">Transmembrane helix</keyword>
<keyword id="KW-0813">Transport</keyword>
<organism>
    <name type="scientific">Haemophilus influenzae (strain ATCC 51907 / DSM 11121 / KW20 / Rd)</name>
    <dbReference type="NCBI Taxonomy" id="71421"/>
    <lineage>
        <taxon>Bacteria</taxon>
        <taxon>Pseudomonadati</taxon>
        <taxon>Pseudomonadota</taxon>
        <taxon>Gammaproteobacteria</taxon>
        <taxon>Pasteurellales</taxon>
        <taxon>Pasteurellaceae</taxon>
        <taxon>Haemophilus</taxon>
    </lineage>
</organism>
<sequence>MNLGIILPLIIYLTFVFGAAIFAYVKRTKGDFLTEYYVGNRSMTGFVLAMTTASTYASASSFVGGPGAAYKYGLGWVLLAMIQVPVVWLALGALGKKFALLSRETNALTINDLFFYRYKNKYLVWLSSLALLLAFFAAMTVQFIGGARLLETTIGISYTQALLLFALTVGIYTFIGGFRAVVLTDTIQGTVMIFGTIILLIGTIYALGGVESAVNKLTEIDPDLVTPYGPNGMLDFQFMASFWILVCFGVVGLPHTAVRCMAFKDSKALHRGMLIGTIVLSIIMLGMHLAGALGRAVIPNLTVSDQVIPTLMIKVLPPIVAGIFLAAPMSAIMSTIDAQLIQSSSIFVKDLYLSAKPEAAKNEKKVSYFSSIITLILTALLIFAALNPPDMIIWLNLFAFGGLEAAFLWVIVLGIYWDKANAYGALSSMIIGLGSYILLTQLGIKLFNFHQIVPSLVFGLIAFLVGNKLGERRIEKTQLKVTAL</sequence>
<proteinExistence type="inferred from homology"/>
<gene>
    <name type="primary">panF</name>
    <name type="ordered locus">HI_0975</name>
</gene>
<name>PANF_HAEIN</name>
<accession>P44963</accession>
<comment type="function">
    <text evidence="1">Catalyzes the sodium-dependent uptake of extracellular pantothenate.</text>
</comment>
<comment type="catalytic activity">
    <reaction evidence="1">
        <text>(R)-pantothenate(in) + Na(+)(in) = (R)-pantothenate(out) + Na(+)(out)</text>
        <dbReference type="Rhea" id="RHEA:29927"/>
        <dbReference type="ChEBI" id="CHEBI:29032"/>
        <dbReference type="ChEBI" id="CHEBI:29101"/>
    </reaction>
    <physiologicalReaction direction="right-to-left" evidence="1">
        <dbReference type="Rhea" id="RHEA:29929"/>
    </physiologicalReaction>
</comment>
<comment type="subcellular location">
    <subcellularLocation>
        <location evidence="1">Cell inner membrane</location>
        <topology evidence="2">Multi-pass membrane protein</topology>
    </subcellularLocation>
</comment>
<comment type="similarity">
    <text evidence="3">Belongs to the sodium:solute symporter (SSF) (TC 2.A.21) family.</text>
</comment>
<evidence type="ECO:0000250" key="1">
    <source>
        <dbReference type="UniProtKB" id="P16256"/>
    </source>
</evidence>
<evidence type="ECO:0000255" key="2"/>
<evidence type="ECO:0000305" key="3"/>
<dbReference type="EMBL" id="L42023">
    <property type="protein sequence ID" value="AAC22634.1"/>
    <property type="molecule type" value="Genomic_DNA"/>
</dbReference>
<dbReference type="PIR" id="H64105">
    <property type="entry name" value="H64105"/>
</dbReference>
<dbReference type="RefSeq" id="NP_439137.1">
    <property type="nucleotide sequence ID" value="NC_000907.1"/>
</dbReference>
<dbReference type="SMR" id="P44963"/>
<dbReference type="STRING" id="71421.HI_0975"/>
<dbReference type="EnsemblBacteria" id="AAC22634">
    <property type="protein sequence ID" value="AAC22634"/>
    <property type="gene ID" value="HI_0975"/>
</dbReference>
<dbReference type="KEGG" id="hin:HI_0975"/>
<dbReference type="PATRIC" id="fig|71421.8.peg.1017"/>
<dbReference type="eggNOG" id="COG4145">
    <property type="taxonomic scope" value="Bacteria"/>
</dbReference>
<dbReference type="HOGENOM" id="CLU_018808_15_1_6"/>
<dbReference type="OrthoDB" id="9814523at2"/>
<dbReference type="PhylomeDB" id="P44963"/>
<dbReference type="BioCyc" id="HINF71421:G1GJ1-1017-MONOMER"/>
<dbReference type="Proteomes" id="UP000000579">
    <property type="component" value="Chromosome"/>
</dbReference>
<dbReference type="GO" id="GO:0005886">
    <property type="term" value="C:plasma membrane"/>
    <property type="evidence" value="ECO:0000318"/>
    <property type="project" value="GO_Central"/>
</dbReference>
<dbReference type="GO" id="GO:0015233">
    <property type="term" value="F:pantothenate transmembrane transporter activity"/>
    <property type="evidence" value="ECO:0000318"/>
    <property type="project" value="GO_Central"/>
</dbReference>
<dbReference type="GO" id="GO:0015081">
    <property type="term" value="F:sodium ion transmembrane transporter activity"/>
    <property type="evidence" value="ECO:0007669"/>
    <property type="project" value="InterPro"/>
</dbReference>
<dbReference type="GO" id="GO:0015293">
    <property type="term" value="F:symporter activity"/>
    <property type="evidence" value="ECO:0007669"/>
    <property type="project" value="UniProtKB-KW"/>
</dbReference>
<dbReference type="GO" id="GO:0015887">
    <property type="term" value="P:pantothenate transmembrane transport"/>
    <property type="evidence" value="ECO:0000318"/>
    <property type="project" value="GO_Central"/>
</dbReference>
<dbReference type="GO" id="GO:0036376">
    <property type="term" value="P:sodium ion export across plasma membrane"/>
    <property type="evidence" value="ECO:0007669"/>
    <property type="project" value="InterPro"/>
</dbReference>
<dbReference type="CDD" id="cd10327">
    <property type="entry name" value="SLC5sbd_PanF"/>
    <property type="match status" value="1"/>
</dbReference>
<dbReference type="FunFam" id="1.20.1730.10:FF:000003">
    <property type="entry name" value="Sodium/pantothenate symporter"/>
    <property type="match status" value="1"/>
</dbReference>
<dbReference type="Gene3D" id="1.20.1730.10">
    <property type="entry name" value="Sodium/glucose cotransporter"/>
    <property type="match status" value="1"/>
</dbReference>
<dbReference type="InterPro" id="IPR038377">
    <property type="entry name" value="Na/Glc_symporter_sf"/>
</dbReference>
<dbReference type="InterPro" id="IPR011849">
    <property type="entry name" value="Na/pantothenate_symporter"/>
</dbReference>
<dbReference type="InterPro" id="IPR001734">
    <property type="entry name" value="Na/solute_symporter"/>
</dbReference>
<dbReference type="InterPro" id="IPR018212">
    <property type="entry name" value="Na/solute_symporter_CS"/>
</dbReference>
<dbReference type="InterPro" id="IPR050277">
    <property type="entry name" value="Sodium:Solute_Symporter"/>
</dbReference>
<dbReference type="NCBIfam" id="TIGR02119">
    <property type="entry name" value="panF"/>
    <property type="match status" value="1"/>
</dbReference>
<dbReference type="NCBIfam" id="TIGR00813">
    <property type="entry name" value="sss"/>
    <property type="match status" value="1"/>
</dbReference>
<dbReference type="PANTHER" id="PTHR48086">
    <property type="entry name" value="SODIUM/PROLINE SYMPORTER-RELATED"/>
    <property type="match status" value="1"/>
</dbReference>
<dbReference type="PANTHER" id="PTHR48086:SF4">
    <property type="entry name" value="SODIUM_PANTOTHENATE SYMPORTER"/>
    <property type="match status" value="1"/>
</dbReference>
<dbReference type="Pfam" id="PF00474">
    <property type="entry name" value="SSF"/>
    <property type="match status" value="1"/>
</dbReference>
<dbReference type="PROSITE" id="PS00456">
    <property type="entry name" value="NA_SOLUT_SYMP_1"/>
    <property type="match status" value="1"/>
</dbReference>
<dbReference type="PROSITE" id="PS00457">
    <property type="entry name" value="NA_SOLUT_SYMP_2"/>
    <property type="match status" value="1"/>
</dbReference>
<dbReference type="PROSITE" id="PS50283">
    <property type="entry name" value="NA_SOLUT_SYMP_3"/>
    <property type="match status" value="1"/>
</dbReference>
<feature type="chain" id="PRO_0000105403" description="Sodium/pantothenate symporter">
    <location>
        <begin position="1"/>
        <end position="484"/>
    </location>
</feature>
<feature type="transmembrane region" description="Helical" evidence="2">
    <location>
        <begin position="3"/>
        <end position="23"/>
    </location>
</feature>
<feature type="transmembrane region" description="Helical" evidence="2">
    <location>
        <begin position="45"/>
        <end position="65"/>
    </location>
</feature>
<feature type="transmembrane region" description="Helical" evidence="2">
    <location>
        <begin position="74"/>
        <end position="94"/>
    </location>
</feature>
<feature type="transmembrane region" description="Helical" evidence="2">
    <location>
        <begin position="124"/>
        <end position="144"/>
    </location>
</feature>
<feature type="transmembrane region" description="Helical" evidence="2">
    <location>
        <begin position="162"/>
        <end position="182"/>
    </location>
</feature>
<feature type="transmembrane region" description="Helical" evidence="2">
    <location>
        <begin position="190"/>
        <end position="210"/>
    </location>
</feature>
<feature type="transmembrane region" description="Helical" evidence="2">
    <location>
        <begin position="238"/>
        <end position="258"/>
    </location>
</feature>
<feature type="transmembrane region" description="Helical" evidence="2">
    <location>
        <begin position="273"/>
        <end position="293"/>
    </location>
</feature>
<feature type="transmembrane region" description="Helical" evidence="2">
    <location>
        <begin position="307"/>
        <end position="327"/>
    </location>
</feature>
<feature type="transmembrane region" description="Helical" evidence="2">
    <location>
        <begin position="366"/>
        <end position="386"/>
    </location>
</feature>
<feature type="transmembrane region" description="Helical" evidence="2">
    <location>
        <begin position="397"/>
        <end position="417"/>
    </location>
</feature>
<feature type="transmembrane region" description="Helical" evidence="2">
    <location>
        <begin position="424"/>
        <end position="444"/>
    </location>
</feature>
<feature type="transmembrane region" description="Helical" evidence="2">
    <location>
        <begin position="446"/>
        <end position="466"/>
    </location>
</feature>